<keyword id="KW-0067">ATP-binding</keyword>
<keyword id="KW-0143">Chaperone</keyword>
<keyword id="KW-0479">Metal-binding</keyword>
<keyword id="KW-0547">Nucleotide-binding</keyword>
<keyword id="KW-1185">Reference proteome</keyword>
<keyword id="KW-0862">Zinc</keyword>
<comment type="function">
    <text evidence="1 4 5">ATP-dependent specificity component of the Clp protease (By similarity). It directs the protease to specific substrates (By similarity). Required for degradation of response regulator CtrA, thus contributing to the G1-to-S transition (PubMed:9755166). Required to degrade DNA replication inhibitor toxin SocB, this function is probably the reason why the protease is essential in this organism (PubMed:24239291). Can perform chaperone functions in the absence of ClpP (By similarity).</text>
</comment>
<comment type="subunit">
    <text evidence="1 4">Component of the ClpX-ClpP complex. Forms a hexameric ring that, in the presence of ATP, binds to fourteen ClpP subunits assembled into a disk-like structure with a central cavity, resembling the structure of eukaryotic proteasomes (By similarity). Interacts with SocA (PubMed:20472802).</text>
</comment>
<comment type="domain">
    <text evidence="4">The N-terminal domain (residues 1-62) is required for interaction with SocA and targeting of SocB for degradation by ClpXP.</text>
</comment>
<comment type="disruption phenotype">
    <text evidence="4 5">Essential, it cannot be deleted (PubMed:24239291, PubMed:9755166). When depleted for ClpX cells arrest before the initiation of chromosome replication and are blocked in the cell division process (PubMed:9755166). In depletion experiments ClpX protein starts to decline after about 4 hours, which coincides with cell filamention and a 1000-fold loss of viability by 12 hours; SocB protein accumulates. Deletion of socB permits slower than wild-type growth of the clpX disruption.</text>
</comment>
<comment type="similarity">
    <text evidence="1">Belongs to the ClpX chaperone family.</text>
</comment>
<sequence>MTKAASGDTKSTLYCSFCGKSQHEVRKLIAGPTVFICDECVELCMDIIREEHKIAFVKSKDGVPTPREICEVLDDYVIGQGHAKKVLAVAVHNHYKRLNHASKNNDVELAKSNILLVGPTGTGKTLLAQTLARIIDVPFTMADATTLTEAGYVGEDVENIVLKLLQAADYNVERAQRGIVYIDEIDKISRKSDNPSITRDVSGEGVQQALLKIMEGTVASVPPQGGRKHPQQEFLQVDTTNILFICGGAFAGLEKIISARGAAKSIGFGAKVTDPEERRTGEILRNVEPDDLQRFGLIPEFIGRLPVVATLEDLDEAALVKILTEPKNAFVKQYQRLFEMENIGLTFTEDALHQVAKKAIARKTGARGLRSIMEGILLETMFELPTYEGVEEVVVNAEVVEGRAQPLLIYAEKKGGAASA</sequence>
<feature type="chain" id="PRO_0000378282" description="ATP-dependent Clp protease ATP-binding subunit ClpX">
    <location>
        <begin position="1"/>
        <end position="420"/>
    </location>
</feature>
<feature type="domain" description="ClpX-type ZB" evidence="2">
    <location>
        <begin position="3"/>
        <end position="56"/>
    </location>
</feature>
<feature type="region of interest" description="Required for interaction of SocA with this protein and degradation of SocB by ClpXP" evidence="3">
    <location>
        <begin position="1"/>
        <end position="62"/>
    </location>
</feature>
<feature type="binding site" evidence="2">
    <location>
        <position position="15"/>
    </location>
    <ligand>
        <name>Zn(2+)</name>
        <dbReference type="ChEBI" id="CHEBI:29105"/>
    </ligand>
</feature>
<feature type="binding site" evidence="2">
    <location>
        <position position="18"/>
    </location>
    <ligand>
        <name>Zn(2+)</name>
        <dbReference type="ChEBI" id="CHEBI:29105"/>
    </ligand>
</feature>
<feature type="binding site" evidence="2">
    <location>
        <position position="37"/>
    </location>
    <ligand>
        <name>Zn(2+)</name>
        <dbReference type="ChEBI" id="CHEBI:29105"/>
    </ligand>
</feature>
<feature type="binding site" evidence="2">
    <location>
        <position position="40"/>
    </location>
    <ligand>
        <name>Zn(2+)</name>
        <dbReference type="ChEBI" id="CHEBI:29105"/>
    </ligand>
</feature>
<feature type="binding site" evidence="1">
    <location>
        <begin position="119"/>
        <end position="126"/>
    </location>
    <ligand>
        <name>ATP</name>
        <dbReference type="ChEBI" id="CHEBI:30616"/>
    </ligand>
</feature>
<feature type="mutagenesis site" description="Disrupts interaction with SocA but not self-association." evidence="4">
    <original>L</original>
    <variation>A</variation>
    <location>
        <position position="13"/>
    </location>
</feature>
<feature type="mutagenesis site" description="Disrupts interaction with SocA but not self-association." evidence="4">
    <original>I</original>
    <variation>A</variation>
    <location>
        <position position="47"/>
    </location>
</feature>
<proteinExistence type="evidence at protein level"/>
<protein>
    <recommendedName>
        <fullName evidence="1">ATP-dependent Clp protease ATP-binding subunit ClpX</fullName>
    </recommendedName>
</protein>
<dbReference type="EMBL" id="AJ010321">
    <property type="protein sequence ID" value="CAA09092.1"/>
    <property type="molecule type" value="Genomic_DNA"/>
</dbReference>
<dbReference type="EMBL" id="CP001340">
    <property type="protein sequence ID" value="ACL95504.1"/>
    <property type="molecule type" value="Genomic_DNA"/>
</dbReference>
<dbReference type="RefSeq" id="WP_010919827.1">
    <property type="nucleotide sequence ID" value="NC_011916.1"/>
</dbReference>
<dbReference type="RefSeq" id="YP_002517412.1">
    <property type="nucleotide sequence ID" value="NC_011916.1"/>
</dbReference>
<dbReference type="SMR" id="B8GX14"/>
<dbReference type="GeneID" id="7333370"/>
<dbReference type="KEGG" id="ccs:CCNA_02039"/>
<dbReference type="PATRIC" id="fig|565050.3.peg.1996"/>
<dbReference type="HOGENOM" id="CLU_014218_8_2_5"/>
<dbReference type="OrthoDB" id="9804062at2"/>
<dbReference type="PhylomeDB" id="B8GX14"/>
<dbReference type="PRO" id="PR:B8GX14"/>
<dbReference type="Proteomes" id="UP000001364">
    <property type="component" value="Chromosome"/>
</dbReference>
<dbReference type="GO" id="GO:0009376">
    <property type="term" value="C:HslUV protease complex"/>
    <property type="evidence" value="ECO:0007669"/>
    <property type="project" value="TreeGrafter"/>
</dbReference>
<dbReference type="GO" id="GO:0005524">
    <property type="term" value="F:ATP binding"/>
    <property type="evidence" value="ECO:0007669"/>
    <property type="project" value="UniProtKB-UniRule"/>
</dbReference>
<dbReference type="GO" id="GO:0016887">
    <property type="term" value="F:ATP hydrolysis activity"/>
    <property type="evidence" value="ECO:0007669"/>
    <property type="project" value="InterPro"/>
</dbReference>
<dbReference type="GO" id="GO:0140662">
    <property type="term" value="F:ATP-dependent protein folding chaperone"/>
    <property type="evidence" value="ECO:0007669"/>
    <property type="project" value="InterPro"/>
</dbReference>
<dbReference type="GO" id="GO:0046983">
    <property type="term" value="F:protein dimerization activity"/>
    <property type="evidence" value="ECO:0007669"/>
    <property type="project" value="InterPro"/>
</dbReference>
<dbReference type="GO" id="GO:0051082">
    <property type="term" value="F:unfolded protein binding"/>
    <property type="evidence" value="ECO:0007669"/>
    <property type="project" value="UniProtKB-UniRule"/>
</dbReference>
<dbReference type="GO" id="GO:0008270">
    <property type="term" value="F:zinc ion binding"/>
    <property type="evidence" value="ECO:0007669"/>
    <property type="project" value="InterPro"/>
</dbReference>
<dbReference type="GO" id="GO:0051301">
    <property type="term" value="P:cell division"/>
    <property type="evidence" value="ECO:0007669"/>
    <property type="project" value="TreeGrafter"/>
</dbReference>
<dbReference type="GO" id="GO:0051603">
    <property type="term" value="P:proteolysis involved in protein catabolic process"/>
    <property type="evidence" value="ECO:0007669"/>
    <property type="project" value="TreeGrafter"/>
</dbReference>
<dbReference type="CDD" id="cd19497">
    <property type="entry name" value="RecA-like_ClpX"/>
    <property type="match status" value="1"/>
</dbReference>
<dbReference type="FunFam" id="1.10.8.60:FF:000002">
    <property type="entry name" value="ATP-dependent Clp protease ATP-binding subunit ClpX"/>
    <property type="match status" value="1"/>
</dbReference>
<dbReference type="FunFam" id="3.40.50.300:FF:000005">
    <property type="entry name" value="ATP-dependent Clp protease ATP-binding subunit ClpX"/>
    <property type="match status" value="1"/>
</dbReference>
<dbReference type="Gene3D" id="1.10.8.60">
    <property type="match status" value="1"/>
</dbReference>
<dbReference type="Gene3D" id="6.20.220.10">
    <property type="entry name" value="ClpX chaperone, C4-type zinc finger domain"/>
    <property type="match status" value="1"/>
</dbReference>
<dbReference type="Gene3D" id="3.40.50.300">
    <property type="entry name" value="P-loop containing nucleotide triphosphate hydrolases"/>
    <property type="match status" value="1"/>
</dbReference>
<dbReference type="HAMAP" id="MF_00175">
    <property type="entry name" value="ClpX"/>
    <property type="match status" value="1"/>
</dbReference>
<dbReference type="InterPro" id="IPR003593">
    <property type="entry name" value="AAA+_ATPase"/>
</dbReference>
<dbReference type="InterPro" id="IPR050052">
    <property type="entry name" value="ATP-dep_Clp_protease_ClpX"/>
</dbReference>
<dbReference type="InterPro" id="IPR003959">
    <property type="entry name" value="ATPase_AAA_core"/>
</dbReference>
<dbReference type="InterPro" id="IPR019489">
    <property type="entry name" value="Clp_ATPase_C"/>
</dbReference>
<dbReference type="InterPro" id="IPR004487">
    <property type="entry name" value="Clp_protease_ATP-bd_su_ClpX"/>
</dbReference>
<dbReference type="InterPro" id="IPR046425">
    <property type="entry name" value="ClpX_bact"/>
</dbReference>
<dbReference type="InterPro" id="IPR027417">
    <property type="entry name" value="P-loop_NTPase"/>
</dbReference>
<dbReference type="InterPro" id="IPR010603">
    <property type="entry name" value="Znf_CppX_C4"/>
</dbReference>
<dbReference type="InterPro" id="IPR038366">
    <property type="entry name" value="Znf_CppX_C4_sf"/>
</dbReference>
<dbReference type="NCBIfam" id="TIGR00382">
    <property type="entry name" value="clpX"/>
    <property type="match status" value="1"/>
</dbReference>
<dbReference type="NCBIfam" id="NF003745">
    <property type="entry name" value="PRK05342.1"/>
    <property type="match status" value="1"/>
</dbReference>
<dbReference type="PANTHER" id="PTHR48102:SF7">
    <property type="entry name" value="ATP-DEPENDENT CLP PROTEASE ATP-BINDING SUBUNIT CLPX-LIKE, MITOCHONDRIAL"/>
    <property type="match status" value="1"/>
</dbReference>
<dbReference type="PANTHER" id="PTHR48102">
    <property type="entry name" value="ATP-DEPENDENT CLP PROTEASE ATP-BINDING SUBUNIT CLPX-LIKE, MITOCHONDRIAL-RELATED"/>
    <property type="match status" value="1"/>
</dbReference>
<dbReference type="Pfam" id="PF07724">
    <property type="entry name" value="AAA_2"/>
    <property type="match status" value="1"/>
</dbReference>
<dbReference type="Pfam" id="PF10431">
    <property type="entry name" value="ClpB_D2-small"/>
    <property type="match status" value="1"/>
</dbReference>
<dbReference type="Pfam" id="PF06689">
    <property type="entry name" value="zf-C4_ClpX"/>
    <property type="match status" value="1"/>
</dbReference>
<dbReference type="SMART" id="SM00382">
    <property type="entry name" value="AAA"/>
    <property type="match status" value="1"/>
</dbReference>
<dbReference type="SMART" id="SM01086">
    <property type="entry name" value="ClpB_D2-small"/>
    <property type="match status" value="1"/>
</dbReference>
<dbReference type="SMART" id="SM00994">
    <property type="entry name" value="zf-C4_ClpX"/>
    <property type="match status" value="1"/>
</dbReference>
<dbReference type="SUPFAM" id="SSF57716">
    <property type="entry name" value="Glucocorticoid receptor-like (DNA-binding domain)"/>
    <property type="match status" value="1"/>
</dbReference>
<dbReference type="SUPFAM" id="SSF52540">
    <property type="entry name" value="P-loop containing nucleoside triphosphate hydrolases"/>
    <property type="match status" value="1"/>
</dbReference>
<dbReference type="PROSITE" id="PS51902">
    <property type="entry name" value="CLPX_ZB"/>
    <property type="match status" value="1"/>
</dbReference>
<organism>
    <name type="scientific">Caulobacter vibrioides (strain NA1000 / CB15N)</name>
    <name type="common">Caulobacter crescentus</name>
    <dbReference type="NCBI Taxonomy" id="565050"/>
    <lineage>
        <taxon>Bacteria</taxon>
        <taxon>Pseudomonadati</taxon>
        <taxon>Pseudomonadota</taxon>
        <taxon>Alphaproteobacteria</taxon>
        <taxon>Caulobacterales</taxon>
        <taxon>Caulobacteraceae</taxon>
        <taxon>Caulobacter</taxon>
    </lineage>
</organism>
<evidence type="ECO:0000255" key="1">
    <source>
        <dbReference type="HAMAP-Rule" id="MF_00175"/>
    </source>
</evidence>
<evidence type="ECO:0000255" key="2">
    <source>
        <dbReference type="PROSITE-ProRule" id="PRU01250"/>
    </source>
</evidence>
<evidence type="ECO:0000269" key="3">
    <source>
    </source>
</evidence>
<evidence type="ECO:0000269" key="4">
    <source>
    </source>
</evidence>
<evidence type="ECO:0000269" key="5">
    <source>
    </source>
</evidence>
<name>CLPX_CAUVN</name>
<reference key="1">
    <citation type="journal article" date="1999" name="J. Bacteriol.">
        <title>Identification and transcriptional control of the genes encoding the Caulobacter crescentus ClpXP protease.</title>
        <authorList>
            <person name="Osteras M."/>
            <person name="Stotz A."/>
            <person name="Schmid Nuoffer S."/>
            <person name="Jenal U."/>
        </authorList>
    </citation>
    <scope>NUCLEOTIDE SEQUENCE [GENOMIC DNA]</scope>
</reference>
<reference key="2">
    <citation type="journal article" date="2010" name="J. Bacteriol.">
        <title>The genetic basis of laboratory adaptation in Caulobacter crescentus.</title>
        <authorList>
            <person name="Marks M.E."/>
            <person name="Castro-Rojas C.M."/>
            <person name="Teiling C."/>
            <person name="Du L."/>
            <person name="Kapatral V."/>
            <person name="Walunas T.L."/>
            <person name="Crosson S."/>
        </authorList>
    </citation>
    <scope>NUCLEOTIDE SEQUENCE [LARGE SCALE GENOMIC DNA]</scope>
    <source>
        <strain>NA1000 / CB15N</strain>
    </source>
</reference>
<reference key="3">
    <citation type="journal article" date="1998" name="EMBO J.">
        <title>An essential protease involved in bacterial cell-cycle control.</title>
        <authorList>
            <person name="Jenal U."/>
            <person name="Fuchs T."/>
        </authorList>
    </citation>
    <scope>FUNCTION</scope>
    <scope>DISRUPTION PHENOTYPE</scope>
    <source>
        <strain>NA1000 / CB15N</strain>
    </source>
</reference>
<reference key="4">
    <citation type="journal article" date="2013" name="Mol. Cell">
        <title>A bacterial toxin inhibits DNA replication elongation through a direct interaction with the beta sliding clamp.</title>
        <authorList>
            <person name="Aakre C.D."/>
            <person name="Phung T.N."/>
            <person name="Huang D."/>
            <person name="Laub M.T."/>
        </authorList>
    </citation>
    <scope>FUNCTION</scope>
    <scope>SUBSTRATE</scope>
    <scope>INTERACTION WITH SOCA</scope>
    <scope>DOMAIN</scope>
    <scope>DISRUPTION PHENOTYPE</scope>
    <scope>MUTAGENESIS OF LEU-13 AND ILE-47</scope>
</reference>
<accession>B8GX14</accession>
<accession>O87708</accession>
<gene>
    <name evidence="1" type="primary">clpX</name>
    <name type="ordered locus">CCNA_02039</name>
</gene>